<feature type="signal peptide" evidence="2">
    <location>
        <begin position="1"/>
        <end position="22"/>
    </location>
</feature>
<feature type="peptide" id="PRO_0000444274" description="Neuropeptide SIFamide" evidence="3">
    <location>
        <begin position="23"/>
        <end position="34"/>
    </location>
</feature>
<feature type="propeptide" id="PRO_0000444275" evidence="5">
    <location>
        <begin position="38"/>
        <end position="70"/>
    </location>
</feature>
<feature type="modified residue" description="Phenylalanine amide" evidence="3">
    <location>
        <position position="34"/>
    </location>
</feature>
<keyword id="KW-0027">Amidation</keyword>
<keyword id="KW-0165">Cleavage on pair of basic residues</keyword>
<keyword id="KW-0903">Direct protein sequencing</keyword>
<keyword id="KW-0527">Neuropeptide</keyword>
<keyword id="KW-0964">Secreted</keyword>
<keyword id="KW-0732">Signal</keyword>
<evidence type="ECO:0000250" key="1">
    <source>
        <dbReference type="UniProtKB" id="Q6IGX9"/>
    </source>
</evidence>
<evidence type="ECO:0000255" key="2"/>
<evidence type="ECO:0000269" key="3">
    <source>
    </source>
</evidence>
<evidence type="ECO:0000303" key="4">
    <source>
    </source>
</evidence>
<evidence type="ECO:0000305" key="5"/>
<accession>C0HKV8</accession>
<comment type="function">
    <text evidence="1">Ligand for the neuropeptide SIFamide receptor.</text>
</comment>
<comment type="subcellular location">
    <subcellularLocation>
        <location evidence="5">Secreted</location>
    </subcellularLocation>
</comment>
<comment type="tissue specificity">
    <text evidence="3">Expressed in antennal lobe (AL) and gnathal ganglion (GNG) with expression detected in most animals (at protein level). Not expressed in corpora cardiaca (CC) and corpora allata (CA) (at protein level).</text>
</comment>
<comment type="mass spectrometry" mass="1425.77" method="MALDI" evidence="3"/>
<comment type="similarity">
    <text evidence="5">Belongs to the FARP (FMRFamide related peptide) family.</text>
</comment>
<organism>
    <name type="scientific">Agrotis ipsilon</name>
    <name type="common">Black cutworm moth</name>
    <dbReference type="NCBI Taxonomy" id="56364"/>
    <lineage>
        <taxon>Eukaryota</taxon>
        <taxon>Metazoa</taxon>
        <taxon>Ecdysozoa</taxon>
        <taxon>Arthropoda</taxon>
        <taxon>Hexapoda</taxon>
        <taxon>Insecta</taxon>
        <taxon>Pterygota</taxon>
        <taxon>Neoptera</taxon>
        <taxon>Endopterygota</taxon>
        <taxon>Lepidoptera</taxon>
        <taxon>Glossata</taxon>
        <taxon>Ditrysia</taxon>
        <taxon>Noctuoidea</taxon>
        <taxon>Noctuidae</taxon>
        <taxon>Noctuinae</taxon>
        <taxon>Noctuini</taxon>
        <taxon>Agrotis</taxon>
    </lineage>
</organism>
<sequence length="70" mass="7862">MRFIVALCLFAIVMCIIHKAEGTYRKPPFNGSIFGKRGVVEYDTTGRALSALCEIASETCQAWYQTLENK</sequence>
<proteinExistence type="evidence at protein level"/>
<reference evidence="5" key="1">
    <citation type="journal article" date="2018" name="J. Proteome Res.">
        <title>Mating-induced differential peptidomics of neuropeptides and protein hormones in Agrotis ipsilon moths.</title>
        <authorList>
            <person name="Diesner M."/>
            <person name="Gallot A."/>
            <person name="Binz H."/>
            <person name="Gaertner C."/>
            <person name="Vitecek S."/>
            <person name="Kahnt J."/>
            <person name="Schachtner J."/>
            <person name="Jacquin-Joly E."/>
            <person name="Gadenne C."/>
        </authorList>
    </citation>
    <scope>NUCLEOTIDE SEQUENCE [MRNA]</scope>
    <scope>PROTEIN SEQUENCE OF 23-34</scope>
    <scope>TISSUE SPECIFICITY</scope>
    <scope>MASS SPECTROMETRY</scope>
    <scope>IDENTIFICATION BY MASS SPECTROMETRY</scope>
    <scope>AMIDATION AT PHE-34</scope>
</reference>
<name>SIFA_AGRIP</name>
<protein>
    <recommendedName>
        <fullName evidence="4">Neuropeptide SIFamide</fullName>
        <shortName evidence="4">SIFa</shortName>
    </recommendedName>
    <alternativeName>
        <fullName evidence="5">TYRKPPFNGSIF-amide</fullName>
    </alternativeName>
</protein>
<dbReference type="GO" id="GO:0005576">
    <property type="term" value="C:extracellular region"/>
    <property type="evidence" value="ECO:0007669"/>
    <property type="project" value="UniProtKB-SubCell"/>
</dbReference>
<dbReference type="GO" id="GO:0007218">
    <property type="term" value="P:neuropeptide signaling pathway"/>
    <property type="evidence" value="ECO:0007669"/>
    <property type="project" value="UniProtKB-KW"/>
</dbReference>